<protein>
    <recommendedName>
        <fullName>DNA-directed RNA polymerase subunit omega</fullName>
        <shortName>RNAP omega subunit</shortName>
        <ecNumber>2.7.7.6</ecNumber>
    </recommendedName>
    <alternativeName>
        <fullName>RNA polymerase omega subunit</fullName>
    </alternativeName>
    <alternativeName>
        <fullName>Transcriptase subunit omega</fullName>
    </alternativeName>
</protein>
<keyword id="KW-0240">DNA-directed RNA polymerase</keyword>
<keyword id="KW-0548">Nucleotidyltransferase</keyword>
<keyword id="KW-1185">Reference proteome</keyword>
<keyword id="KW-0804">Transcription</keyword>
<keyword id="KW-0808">Transferase</keyword>
<name>RPOZ_PASMU</name>
<feature type="chain" id="PRO_0000128958" description="DNA-directed RNA polymerase subunit omega">
    <location>
        <begin position="1"/>
        <end position="89"/>
    </location>
</feature>
<dbReference type="EC" id="2.7.7.6"/>
<dbReference type="EMBL" id="AE004439">
    <property type="protein sequence ID" value="AAK03005.1"/>
    <property type="molecule type" value="Genomic_DNA"/>
</dbReference>
<dbReference type="RefSeq" id="WP_005717016.1">
    <property type="nucleotide sequence ID" value="NC_002663.1"/>
</dbReference>
<dbReference type="SMR" id="Q9CMB2"/>
<dbReference type="STRING" id="272843.PM0921"/>
<dbReference type="EnsemblBacteria" id="AAK03005">
    <property type="protein sequence ID" value="AAK03005"/>
    <property type="gene ID" value="PM0921"/>
</dbReference>
<dbReference type="GeneID" id="77206224"/>
<dbReference type="KEGG" id="pmu:PM0921"/>
<dbReference type="HOGENOM" id="CLU_125406_5_3_6"/>
<dbReference type="OrthoDB" id="9796300at2"/>
<dbReference type="Proteomes" id="UP000000809">
    <property type="component" value="Chromosome"/>
</dbReference>
<dbReference type="GO" id="GO:0000428">
    <property type="term" value="C:DNA-directed RNA polymerase complex"/>
    <property type="evidence" value="ECO:0007669"/>
    <property type="project" value="UniProtKB-KW"/>
</dbReference>
<dbReference type="GO" id="GO:0003677">
    <property type="term" value="F:DNA binding"/>
    <property type="evidence" value="ECO:0007669"/>
    <property type="project" value="UniProtKB-UniRule"/>
</dbReference>
<dbReference type="GO" id="GO:0003899">
    <property type="term" value="F:DNA-directed RNA polymerase activity"/>
    <property type="evidence" value="ECO:0007669"/>
    <property type="project" value="UniProtKB-UniRule"/>
</dbReference>
<dbReference type="GO" id="GO:0006351">
    <property type="term" value="P:DNA-templated transcription"/>
    <property type="evidence" value="ECO:0007669"/>
    <property type="project" value="UniProtKB-UniRule"/>
</dbReference>
<dbReference type="Gene3D" id="3.90.940.10">
    <property type="match status" value="1"/>
</dbReference>
<dbReference type="HAMAP" id="MF_00366">
    <property type="entry name" value="RNApol_bact_RpoZ"/>
    <property type="match status" value="1"/>
</dbReference>
<dbReference type="InterPro" id="IPR003716">
    <property type="entry name" value="DNA-dir_RNA_pol_omega"/>
</dbReference>
<dbReference type="InterPro" id="IPR006110">
    <property type="entry name" value="Pol_omega/Rpo6/RPB6"/>
</dbReference>
<dbReference type="InterPro" id="IPR036161">
    <property type="entry name" value="RPB6/omega-like_sf"/>
</dbReference>
<dbReference type="NCBIfam" id="TIGR00690">
    <property type="entry name" value="rpoZ"/>
    <property type="match status" value="1"/>
</dbReference>
<dbReference type="PANTHER" id="PTHR34476">
    <property type="entry name" value="DNA-DIRECTED RNA POLYMERASE SUBUNIT OMEGA"/>
    <property type="match status" value="1"/>
</dbReference>
<dbReference type="PANTHER" id="PTHR34476:SF1">
    <property type="entry name" value="DNA-DIRECTED RNA POLYMERASE SUBUNIT OMEGA"/>
    <property type="match status" value="1"/>
</dbReference>
<dbReference type="Pfam" id="PF01192">
    <property type="entry name" value="RNA_pol_Rpb6"/>
    <property type="match status" value="1"/>
</dbReference>
<dbReference type="SMART" id="SM01409">
    <property type="entry name" value="RNA_pol_Rpb6"/>
    <property type="match status" value="1"/>
</dbReference>
<dbReference type="SUPFAM" id="SSF63562">
    <property type="entry name" value="RPB6/omega subunit-like"/>
    <property type="match status" value="1"/>
</dbReference>
<evidence type="ECO:0000250" key="1"/>
<evidence type="ECO:0000305" key="2"/>
<gene>
    <name type="primary">rpoZ</name>
    <name type="ordered locus">PM0921</name>
</gene>
<accession>Q9CMB2</accession>
<proteinExistence type="inferred from homology"/>
<reference key="1">
    <citation type="journal article" date="2001" name="Proc. Natl. Acad. Sci. U.S.A.">
        <title>Complete genomic sequence of Pasteurella multocida Pm70.</title>
        <authorList>
            <person name="May B.J."/>
            <person name="Zhang Q."/>
            <person name="Li L.L."/>
            <person name="Paustian M.L."/>
            <person name="Whittam T.S."/>
            <person name="Kapur V."/>
        </authorList>
    </citation>
    <scope>NUCLEOTIDE SEQUENCE [LARGE SCALE GENOMIC DNA]</scope>
    <source>
        <strain>Pm70</strain>
    </source>
</reference>
<sequence>MARVTVQGAVEKIGNRFDLILTAARRARQLQLHIREPLVPEDNDKPTVIALREIEKGLINNEIMNAQERYDALEKENSELHAVSLLSNQ</sequence>
<organism>
    <name type="scientific">Pasteurella multocida (strain Pm70)</name>
    <dbReference type="NCBI Taxonomy" id="272843"/>
    <lineage>
        <taxon>Bacteria</taxon>
        <taxon>Pseudomonadati</taxon>
        <taxon>Pseudomonadota</taxon>
        <taxon>Gammaproteobacteria</taxon>
        <taxon>Pasteurellales</taxon>
        <taxon>Pasteurellaceae</taxon>
        <taxon>Pasteurella</taxon>
    </lineage>
</organism>
<comment type="function">
    <text evidence="1">Promotes RNA polymerase assembly. Latches the N- and C-terminal regions of the beta' subunit thereby facilitating its interaction with the beta and alpha subunits (By similarity).</text>
</comment>
<comment type="catalytic activity">
    <reaction>
        <text>RNA(n) + a ribonucleoside 5'-triphosphate = RNA(n+1) + diphosphate</text>
        <dbReference type="Rhea" id="RHEA:21248"/>
        <dbReference type="Rhea" id="RHEA-COMP:14527"/>
        <dbReference type="Rhea" id="RHEA-COMP:17342"/>
        <dbReference type="ChEBI" id="CHEBI:33019"/>
        <dbReference type="ChEBI" id="CHEBI:61557"/>
        <dbReference type="ChEBI" id="CHEBI:140395"/>
        <dbReference type="EC" id="2.7.7.6"/>
    </reaction>
</comment>
<comment type="subunit">
    <text evidence="1">The RNAP catalytic core consists of 2 alpha, 1 beta, 1 beta' and 1 omega subunit. When a sigma factor is associated with the core the holoenzyme is formed, which can initiate transcription (By similarity).</text>
</comment>
<comment type="similarity">
    <text evidence="2">Belongs to the RNA polymerase subunit omega family.</text>
</comment>